<comment type="function">
    <text evidence="4">Mediates visceral muscle contractile activity (myotropic activity).</text>
</comment>
<comment type="subcellular location">
    <subcellularLocation>
        <location evidence="4">Secreted</location>
    </subcellularLocation>
</comment>
<comment type="tissue specificity">
    <text evidence="3">Expressed in abdominal perisympathetic organs and abdominal ganglia.</text>
</comment>
<comment type="mass spectrometry">
    <text>With amidation.</text>
</comment>
<comment type="similarity">
    <text evidence="1">Belongs to the periviscerokinin family.</text>
</comment>
<sequence>GSTGLIPFGRP</sequence>
<dbReference type="GO" id="GO:0005576">
    <property type="term" value="C:extracellular region"/>
    <property type="evidence" value="ECO:0007669"/>
    <property type="project" value="UniProtKB-SubCell"/>
</dbReference>
<dbReference type="GO" id="GO:0007218">
    <property type="term" value="P:neuropeptide signaling pathway"/>
    <property type="evidence" value="ECO:0007669"/>
    <property type="project" value="UniProtKB-KW"/>
</dbReference>
<dbReference type="InterPro" id="IPR013231">
    <property type="entry name" value="Periviscerokinin"/>
</dbReference>
<dbReference type="Pfam" id="PF08259">
    <property type="entry name" value="Periviscerokin"/>
    <property type="match status" value="1"/>
</dbReference>
<protein>
    <recommendedName>
        <fullName>Periviscerokinin-1</fullName>
        <shortName>PerVi-PVK-1</shortName>
    </recommendedName>
</protein>
<feature type="peptide" id="PRO_0000044251" description="Periviscerokinin-1">
    <location>
        <begin position="1"/>
        <end position="11"/>
    </location>
</feature>
<feature type="modified residue" description="Proline amide" evidence="2 3">
    <location>
        <position position="11"/>
    </location>
</feature>
<proteinExistence type="evidence at protein level"/>
<reference key="1">
    <citation type="journal article" date="2009" name="BMC Evol. Biol.">
        <title>A proteomic approach for studying insect phylogeny: CAPA peptides of ancient insect taxa (Dictyoptera, Blattoptera) as a test case.</title>
        <authorList>
            <person name="Roth S."/>
            <person name="Fromm B."/>
            <person name="Gaede G."/>
            <person name="Predel R."/>
        </authorList>
    </citation>
    <scope>PROTEIN SEQUENCE</scope>
    <scope>AMIDATION AT PRO-11</scope>
    <source>
        <tissue>Abdominal perisympathetic organs</tissue>
    </source>
</reference>
<reference evidence="4" key="2">
    <citation type="submission" date="2005-09" db="UniProtKB">
        <authorList>
            <person name="Predel R."/>
        </authorList>
    </citation>
    <scope>PROTEIN SEQUENCE</scope>
    <scope>TISSUE SPECIFICITY</scope>
    <scope>MASS SPECTROMETRY</scope>
    <scope>AMIDATION AT PRO-11</scope>
    <source>
        <tissue>Abdominal perisympathetic organs</tissue>
    </source>
</reference>
<keyword id="KW-0027">Amidation</keyword>
<keyword id="KW-0903">Direct protein sequencing</keyword>
<keyword id="KW-0527">Neuropeptide</keyword>
<keyword id="KW-0964">Secreted</keyword>
<accession>P84657</accession>
<name>PVK1_PERVR</name>
<organism>
    <name type="scientific">Perisphaeria virescens</name>
    <name type="common">Cockroach</name>
    <dbReference type="NCBI Taxonomy" id="344690"/>
    <lineage>
        <taxon>Eukaryota</taxon>
        <taxon>Metazoa</taxon>
        <taxon>Ecdysozoa</taxon>
        <taxon>Arthropoda</taxon>
        <taxon>Hexapoda</taxon>
        <taxon>Insecta</taxon>
        <taxon>Pterygota</taxon>
        <taxon>Neoptera</taxon>
        <taxon>Polyneoptera</taxon>
        <taxon>Dictyoptera</taxon>
        <taxon>Blattodea</taxon>
        <taxon>Blaberoidea</taxon>
        <taxon>Blaberidae</taxon>
        <taxon>Perisphaerinae</taxon>
        <taxon>Perisphaeria</taxon>
    </lineage>
</organism>
<evidence type="ECO:0000255" key="1"/>
<evidence type="ECO:0000269" key="2">
    <source>
    </source>
</evidence>
<evidence type="ECO:0000269" key="3">
    <source ref="2"/>
</evidence>
<evidence type="ECO:0000305" key="4"/>